<feature type="chain" id="PRO_0000309599" description="Phosphoenolpyruvate carboxylase">
    <location>
        <begin position="1"/>
        <end position="492"/>
    </location>
</feature>
<proteinExistence type="inferred from homology"/>
<gene>
    <name evidence="1" type="primary">ppcA</name>
    <name type="ordered locus">VNG_2259C</name>
</gene>
<dbReference type="EC" id="4.1.1.31" evidence="1"/>
<dbReference type="EMBL" id="AE004437">
    <property type="protein sequence ID" value="AAG20378.1"/>
    <property type="molecule type" value="Genomic_DNA"/>
</dbReference>
<dbReference type="PIR" id="F84376">
    <property type="entry name" value="F84376"/>
</dbReference>
<dbReference type="RefSeq" id="WP_010903679.1">
    <property type="nucleotide sequence ID" value="NC_002607.1"/>
</dbReference>
<dbReference type="SMR" id="Q9HN43"/>
<dbReference type="STRING" id="64091.VNG_2259C"/>
<dbReference type="PaxDb" id="64091-VNG_2259C"/>
<dbReference type="GeneID" id="89350400"/>
<dbReference type="KEGG" id="hal:VNG_2259C"/>
<dbReference type="PATRIC" id="fig|64091.14.peg.1739"/>
<dbReference type="HOGENOM" id="CLU_517433_0_0_2"/>
<dbReference type="InParanoid" id="Q9HN43"/>
<dbReference type="OrthoDB" id="85849at2157"/>
<dbReference type="PhylomeDB" id="Q9HN43"/>
<dbReference type="Proteomes" id="UP000000554">
    <property type="component" value="Chromosome"/>
</dbReference>
<dbReference type="GO" id="GO:0000287">
    <property type="term" value="F:magnesium ion binding"/>
    <property type="evidence" value="ECO:0007669"/>
    <property type="project" value="UniProtKB-UniRule"/>
</dbReference>
<dbReference type="GO" id="GO:0008964">
    <property type="term" value="F:phosphoenolpyruvate carboxylase activity"/>
    <property type="evidence" value="ECO:0007669"/>
    <property type="project" value="UniProtKB-UniRule"/>
</dbReference>
<dbReference type="GO" id="GO:0015977">
    <property type="term" value="P:carbon fixation"/>
    <property type="evidence" value="ECO:0007669"/>
    <property type="project" value="UniProtKB-UniRule"/>
</dbReference>
<dbReference type="GO" id="GO:0006107">
    <property type="term" value="P:oxaloacetate metabolic process"/>
    <property type="evidence" value="ECO:0007669"/>
    <property type="project" value="UniProtKB-UniRule"/>
</dbReference>
<dbReference type="GO" id="GO:0006099">
    <property type="term" value="P:tricarboxylic acid cycle"/>
    <property type="evidence" value="ECO:0007669"/>
    <property type="project" value="InterPro"/>
</dbReference>
<dbReference type="HAMAP" id="MF_01904">
    <property type="entry name" value="PEPcase_type2"/>
    <property type="match status" value="1"/>
</dbReference>
<dbReference type="InterPro" id="IPR007566">
    <property type="entry name" value="PEP_COase_arc-type"/>
</dbReference>
<dbReference type="InterPro" id="IPR015813">
    <property type="entry name" value="Pyrv/PenolPyrv_kinase-like_dom"/>
</dbReference>
<dbReference type="NCBIfam" id="TIGR02751">
    <property type="entry name" value="PEPCase_arch"/>
    <property type="match status" value="1"/>
</dbReference>
<dbReference type="Pfam" id="PF14010">
    <property type="entry name" value="PEPcase_2"/>
    <property type="match status" value="1"/>
</dbReference>
<dbReference type="PIRSF" id="PIRSF006677">
    <property type="entry name" value="UCP006677"/>
    <property type="match status" value="1"/>
</dbReference>
<dbReference type="SUPFAM" id="SSF51621">
    <property type="entry name" value="Phosphoenolpyruvate/pyruvate domain"/>
    <property type="match status" value="1"/>
</dbReference>
<evidence type="ECO:0000255" key="1">
    <source>
        <dbReference type="HAMAP-Rule" id="MF_01904"/>
    </source>
</evidence>
<reference key="1">
    <citation type="journal article" date="2000" name="Proc. Natl. Acad. Sci. U.S.A.">
        <title>Genome sequence of Halobacterium species NRC-1.</title>
        <authorList>
            <person name="Ng W.V."/>
            <person name="Kennedy S.P."/>
            <person name="Mahairas G.G."/>
            <person name="Berquist B."/>
            <person name="Pan M."/>
            <person name="Shukla H.D."/>
            <person name="Lasky S.R."/>
            <person name="Baliga N.S."/>
            <person name="Thorsson V."/>
            <person name="Sbrogna J."/>
            <person name="Swartzell S."/>
            <person name="Weir D."/>
            <person name="Hall J."/>
            <person name="Dahl T.A."/>
            <person name="Welti R."/>
            <person name="Goo Y.A."/>
            <person name="Leithauser B."/>
            <person name="Keller K."/>
            <person name="Cruz R."/>
            <person name="Danson M.J."/>
            <person name="Hough D.W."/>
            <person name="Maddocks D.G."/>
            <person name="Jablonski P.E."/>
            <person name="Krebs M.P."/>
            <person name="Angevine C.M."/>
            <person name="Dale H."/>
            <person name="Isenbarger T.A."/>
            <person name="Peck R.F."/>
            <person name="Pohlschroder M."/>
            <person name="Spudich J.L."/>
            <person name="Jung K.-H."/>
            <person name="Alam M."/>
            <person name="Freitas T."/>
            <person name="Hou S."/>
            <person name="Daniels C.J."/>
            <person name="Dennis P.P."/>
            <person name="Omer A.D."/>
            <person name="Ebhardt H."/>
            <person name="Lowe T.M."/>
            <person name="Liang P."/>
            <person name="Riley M."/>
            <person name="Hood L."/>
            <person name="DasSarma S."/>
        </authorList>
    </citation>
    <scope>NUCLEOTIDE SEQUENCE [LARGE SCALE GENOMIC DNA]</scope>
    <source>
        <strain>ATCC 700922 / JCM 11081 / NRC-1</strain>
    </source>
</reference>
<organism>
    <name type="scientific">Halobacterium salinarum (strain ATCC 700922 / JCM 11081 / NRC-1)</name>
    <name type="common">Halobacterium halobium</name>
    <dbReference type="NCBI Taxonomy" id="64091"/>
    <lineage>
        <taxon>Archaea</taxon>
        <taxon>Methanobacteriati</taxon>
        <taxon>Methanobacteriota</taxon>
        <taxon>Stenosarchaea group</taxon>
        <taxon>Halobacteria</taxon>
        <taxon>Halobacteriales</taxon>
        <taxon>Halobacteriaceae</taxon>
        <taxon>Halobacterium</taxon>
        <taxon>Halobacterium salinarum NRC-34001</taxon>
    </lineage>
</organism>
<accession>Q9HN43</accession>
<keyword id="KW-0120">Carbon dioxide fixation</keyword>
<keyword id="KW-0456">Lyase</keyword>
<keyword id="KW-0460">Magnesium</keyword>
<keyword id="KW-1185">Reference proteome</keyword>
<comment type="function">
    <text evidence="1">Catalyzes the irreversible beta-carboxylation of phosphoenolpyruvate (PEP) to form oxaloacetate (OAA), a four-carbon dicarboxylic acid source for the tricarboxylic acid cycle.</text>
</comment>
<comment type="catalytic activity">
    <reaction evidence="1">
        <text>oxaloacetate + phosphate = phosphoenolpyruvate + hydrogencarbonate</text>
        <dbReference type="Rhea" id="RHEA:28370"/>
        <dbReference type="ChEBI" id="CHEBI:16452"/>
        <dbReference type="ChEBI" id="CHEBI:17544"/>
        <dbReference type="ChEBI" id="CHEBI:43474"/>
        <dbReference type="ChEBI" id="CHEBI:58702"/>
        <dbReference type="EC" id="4.1.1.31"/>
    </reaction>
</comment>
<comment type="cofactor">
    <cofactor evidence="1">
        <name>Mg(2+)</name>
        <dbReference type="ChEBI" id="CHEBI:18420"/>
    </cofactor>
</comment>
<comment type="subunit">
    <text evidence="1">Homotetramer.</text>
</comment>
<comment type="similarity">
    <text evidence="1">Belongs to the PEPCase type 2 family.</text>
</comment>
<protein>
    <recommendedName>
        <fullName evidence="1">Phosphoenolpyruvate carboxylase</fullName>
        <shortName evidence="1">PEPC</shortName>
        <shortName evidence="1">PEPCase</shortName>
        <ecNumber evidence="1">4.1.1.31</ecNumber>
    </recommendedName>
</protein>
<sequence>MVDVPRLMSTQHPDNATLPFFTAGDVIEGEDEIQEAYYVYSHLGCDEQMWDFEGKEGDEYAVKKLLSRYDEFFADHQLGTDVRLTVRGPNPDVEGSEAKILLEILESIPRSFDAARRFAGEYGLETTAPIFEVIVPMVTDADQLNAVHEYYERFVTGKADEAVWDGRTVEEWVGEFDPASITVIPLIEEREAMLAADDIVREYATAHDQDAVRVFLARSDPALNYGCLAADLINKVALQRLYEMSEATGVDVHPILGAGSAPFRGNLTPERAAATADAYSEVETFTVQSAFKYDYPVETVRDGVATLRDADLGAPPFPIDEARALAVIDRTADAYADQVDAIAGTVNRLSSYVPDRRARKLHVGLFGYAREVGENALPRAIGYTASLYAVGCPPTLLGAHALTDDDAAFVREAFPAYFDHLADAARYFNPRCTDVLDLDDDTLAAAVERVDVTPNSEHRAATDDAIDALQRGDDDALRSAIRRGARERQFLG</sequence>
<name>CAPPA_HALSA</name>